<comment type="function">
    <text evidence="1">Involved in the third step of the chorismate pathway, which leads to the biosynthesis of aromatic amino acids. Catalyzes the cis-dehydration of 3-dehydroquinate (DHQ) and introduces the first double bond of the aromatic ring to yield 3-dehydroshikimate.</text>
</comment>
<comment type="catalytic activity">
    <reaction evidence="1">
        <text>3-dehydroquinate = 3-dehydroshikimate + H2O</text>
        <dbReference type="Rhea" id="RHEA:21096"/>
        <dbReference type="ChEBI" id="CHEBI:15377"/>
        <dbReference type="ChEBI" id="CHEBI:16630"/>
        <dbReference type="ChEBI" id="CHEBI:32364"/>
        <dbReference type="EC" id="4.2.1.10"/>
    </reaction>
</comment>
<comment type="pathway">
    <text evidence="1">Metabolic intermediate biosynthesis; chorismate biosynthesis; chorismate from D-erythrose 4-phosphate and phosphoenolpyruvate: step 3/7.</text>
</comment>
<comment type="subunit">
    <text evidence="1">Homodimer.</text>
</comment>
<comment type="similarity">
    <text evidence="1">Belongs to the type-I 3-dehydroquinase family.</text>
</comment>
<evidence type="ECO:0000255" key="1">
    <source>
        <dbReference type="HAMAP-Rule" id="MF_00214"/>
    </source>
</evidence>
<organism>
    <name type="scientific">Syntrophotalea carbinolica (strain DSM 2380 / NBRC 103641 / GraBd1)</name>
    <name type="common">Pelobacter carbinolicus</name>
    <dbReference type="NCBI Taxonomy" id="338963"/>
    <lineage>
        <taxon>Bacteria</taxon>
        <taxon>Pseudomonadati</taxon>
        <taxon>Thermodesulfobacteriota</taxon>
        <taxon>Desulfuromonadia</taxon>
        <taxon>Desulfuromonadales</taxon>
        <taxon>Syntrophotaleaceae</taxon>
        <taxon>Syntrophotalea</taxon>
    </lineage>
</organism>
<gene>
    <name evidence="1" type="primary">aroD</name>
    <name type="ordered locus">Pcar_2188</name>
</gene>
<name>AROD_SYNC1</name>
<protein>
    <recommendedName>
        <fullName evidence="1">3-dehydroquinate dehydratase</fullName>
        <shortName evidence="1">3-dehydroquinase</shortName>
        <ecNumber evidence="1">4.2.1.10</ecNumber>
    </recommendedName>
    <alternativeName>
        <fullName evidence="1">Type I DHQase</fullName>
    </alternativeName>
    <alternativeName>
        <fullName evidence="1">Type I dehydroquinase</fullName>
        <shortName evidence="1">DHQ1</shortName>
    </alternativeName>
</protein>
<accession>Q3A2I0</accession>
<feature type="chain" id="PRO_1000043178" description="3-dehydroquinate dehydratase">
    <location>
        <begin position="1"/>
        <end position="253"/>
    </location>
</feature>
<feature type="active site" description="Proton donor/acceptor" evidence="1">
    <location>
        <position position="143"/>
    </location>
</feature>
<feature type="active site" description="Schiff-base intermediate with substrate" evidence="1">
    <location>
        <position position="170"/>
    </location>
</feature>
<feature type="binding site" evidence="1">
    <location>
        <begin position="46"/>
        <end position="48"/>
    </location>
    <ligand>
        <name>3-dehydroquinate</name>
        <dbReference type="ChEBI" id="CHEBI:32364"/>
    </ligand>
</feature>
<feature type="binding site" evidence="1">
    <location>
        <position position="82"/>
    </location>
    <ligand>
        <name>3-dehydroquinate</name>
        <dbReference type="ChEBI" id="CHEBI:32364"/>
    </ligand>
</feature>
<feature type="binding site" evidence="1">
    <location>
        <position position="213"/>
    </location>
    <ligand>
        <name>3-dehydroquinate</name>
        <dbReference type="ChEBI" id="CHEBI:32364"/>
    </ligand>
</feature>
<feature type="binding site" evidence="1">
    <location>
        <position position="232"/>
    </location>
    <ligand>
        <name>3-dehydroquinate</name>
        <dbReference type="ChEBI" id="CHEBI:32364"/>
    </ligand>
</feature>
<feature type="binding site" evidence="1">
    <location>
        <position position="236"/>
    </location>
    <ligand>
        <name>3-dehydroquinate</name>
        <dbReference type="ChEBI" id="CHEBI:32364"/>
    </ligand>
</feature>
<proteinExistence type="inferred from homology"/>
<reference key="1">
    <citation type="submission" date="2005-10" db="EMBL/GenBank/DDBJ databases">
        <title>Complete sequence of Pelobacter carbinolicus DSM 2380.</title>
        <authorList>
            <person name="Copeland A."/>
            <person name="Lucas S."/>
            <person name="Lapidus A."/>
            <person name="Barry K."/>
            <person name="Detter J.C."/>
            <person name="Glavina T."/>
            <person name="Hammon N."/>
            <person name="Israni S."/>
            <person name="Pitluck S."/>
            <person name="Chertkov O."/>
            <person name="Schmutz J."/>
            <person name="Larimer F."/>
            <person name="Land M."/>
            <person name="Kyrpides N."/>
            <person name="Ivanova N."/>
            <person name="Richardson P."/>
        </authorList>
    </citation>
    <scope>NUCLEOTIDE SEQUENCE [LARGE SCALE GENOMIC DNA]</scope>
    <source>
        <strain>DSM 2380 / NBRC 103641 / GraBd1</strain>
    </source>
</reference>
<sequence>MATVKVRDVVFGAGAPKICVPMVGRTLDQLVNETEVLKVLDFDLAEWRVDFFEHVEDIEEVKSALFEIRARLGEKPLLFTFRSKREGGQREVSDDYYGALNKALAQTGEIDLVDVELFQEQSVVRELVDTAHEHGVKVVMSSHDFARTPVKEEILMRLCRMQELGADLPKIAVMPQNASDVLVLLDATNTMREHFADRPFITMSMSGLGGVTRLAGEVFGSALTFGSAVEASAPGQINAADLRNILNLLHMQT</sequence>
<dbReference type="EC" id="4.2.1.10" evidence="1"/>
<dbReference type="EMBL" id="CP000142">
    <property type="protein sequence ID" value="ABA89427.1"/>
    <property type="molecule type" value="Genomic_DNA"/>
</dbReference>
<dbReference type="RefSeq" id="WP_011341941.1">
    <property type="nucleotide sequence ID" value="NC_007498.2"/>
</dbReference>
<dbReference type="SMR" id="Q3A2I0"/>
<dbReference type="STRING" id="338963.Pcar_2188"/>
<dbReference type="KEGG" id="pca:Pcar_2188"/>
<dbReference type="eggNOG" id="COG0710">
    <property type="taxonomic scope" value="Bacteria"/>
</dbReference>
<dbReference type="HOGENOM" id="CLU_064444_0_0_7"/>
<dbReference type="OrthoDB" id="9813659at2"/>
<dbReference type="UniPathway" id="UPA00053">
    <property type="reaction ID" value="UER00086"/>
</dbReference>
<dbReference type="Proteomes" id="UP000002534">
    <property type="component" value="Chromosome"/>
</dbReference>
<dbReference type="GO" id="GO:0003855">
    <property type="term" value="F:3-dehydroquinate dehydratase activity"/>
    <property type="evidence" value="ECO:0007669"/>
    <property type="project" value="UniProtKB-UniRule"/>
</dbReference>
<dbReference type="GO" id="GO:0046279">
    <property type="term" value="P:3,4-dihydroxybenzoate biosynthetic process"/>
    <property type="evidence" value="ECO:0007669"/>
    <property type="project" value="TreeGrafter"/>
</dbReference>
<dbReference type="GO" id="GO:0008652">
    <property type="term" value="P:amino acid biosynthetic process"/>
    <property type="evidence" value="ECO:0007669"/>
    <property type="project" value="UniProtKB-KW"/>
</dbReference>
<dbReference type="GO" id="GO:0009073">
    <property type="term" value="P:aromatic amino acid family biosynthetic process"/>
    <property type="evidence" value="ECO:0007669"/>
    <property type="project" value="UniProtKB-KW"/>
</dbReference>
<dbReference type="GO" id="GO:0009423">
    <property type="term" value="P:chorismate biosynthetic process"/>
    <property type="evidence" value="ECO:0007669"/>
    <property type="project" value="UniProtKB-UniRule"/>
</dbReference>
<dbReference type="CDD" id="cd00502">
    <property type="entry name" value="DHQase_I"/>
    <property type="match status" value="1"/>
</dbReference>
<dbReference type="FunFam" id="3.20.20.70:FF:000047">
    <property type="entry name" value="3-dehydroquinate dehydratase"/>
    <property type="match status" value="1"/>
</dbReference>
<dbReference type="Gene3D" id="3.20.20.70">
    <property type="entry name" value="Aldolase class I"/>
    <property type="match status" value="1"/>
</dbReference>
<dbReference type="HAMAP" id="MF_00214">
    <property type="entry name" value="AroD"/>
    <property type="match status" value="1"/>
</dbReference>
<dbReference type="InterPro" id="IPR013785">
    <property type="entry name" value="Aldolase_TIM"/>
</dbReference>
<dbReference type="InterPro" id="IPR001381">
    <property type="entry name" value="DHquinase_I"/>
</dbReference>
<dbReference type="InterPro" id="IPR050146">
    <property type="entry name" value="Type-I_3-dehydroquinase"/>
</dbReference>
<dbReference type="NCBIfam" id="TIGR01093">
    <property type="entry name" value="aroD"/>
    <property type="match status" value="1"/>
</dbReference>
<dbReference type="PANTHER" id="PTHR43699">
    <property type="entry name" value="3-DEHYDROQUINATE DEHYDRATASE"/>
    <property type="match status" value="1"/>
</dbReference>
<dbReference type="PANTHER" id="PTHR43699:SF1">
    <property type="entry name" value="3-DEHYDROQUINATE DEHYDRATASE"/>
    <property type="match status" value="1"/>
</dbReference>
<dbReference type="Pfam" id="PF01487">
    <property type="entry name" value="DHquinase_I"/>
    <property type="match status" value="1"/>
</dbReference>
<dbReference type="SUPFAM" id="SSF51569">
    <property type="entry name" value="Aldolase"/>
    <property type="match status" value="1"/>
</dbReference>
<keyword id="KW-0028">Amino-acid biosynthesis</keyword>
<keyword id="KW-0057">Aromatic amino acid biosynthesis</keyword>
<keyword id="KW-0456">Lyase</keyword>
<keyword id="KW-1185">Reference proteome</keyword>
<keyword id="KW-0704">Schiff base</keyword>